<feature type="chain" id="PRO_0000101142" description="Signal recognition particle receptor FtsY">
    <location>
        <begin position="1"/>
        <end position="421"/>
    </location>
</feature>
<feature type="region of interest" description="Disordered" evidence="2">
    <location>
        <begin position="1"/>
        <end position="31"/>
    </location>
</feature>
<feature type="compositionally biased region" description="Basic residues" evidence="2">
    <location>
        <begin position="1"/>
        <end position="10"/>
    </location>
</feature>
<feature type="binding site" evidence="1">
    <location>
        <begin position="228"/>
        <end position="235"/>
    </location>
    <ligand>
        <name>GTP</name>
        <dbReference type="ChEBI" id="CHEBI:37565"/>
    </ligand>
</feature>
<feature type="binding site" evidence="1">
    <location>
        <begin position="309"/>
        <end position="313"/>
    </location>
    <ligand>
        <name>GTP</name>
        <dbReference type="ChEBI" id="CHEBI:37565"/>
    </ligand>
</feature>
<feature type="binding site" evidence="1">
    <location>
        <begin position="373"/>
        <end position="376"/>
    </location>
    <ligand>
        <name>GTP</name>
        <dbReference type="ChEBI" id="CHEBI:37565"/>
    </ligand>
</feature>
<name>FTSY_NEIMA</name>
<sequence>MFSFFRRKKKQETPALEEAQIQETAAKAESETAQVIENIKEDAESLAESVKGQVESAVETVSGAVEQVKEAVAEMLSEAEEAAEKAAEQVEAAKEAIAETVGEAVGQVQEAVATTEEHKLGWAARLKQGLTKSRDKMAKSLAGVFGGGQIDEDLYEELETVLITSDMGMEATEYLMKDVRDRVSLKGLKDGNELRGALKEALYDLIKPLEKPLVLPETKEPFVIMLAGINGAGKTTSIGKLAKYFQAQGKSVLLAAGDTFRAAAREQLQAWGERNNVTVISQTTGDSAAVCFDAVQAAKARGIDIVLADTAGRLPTQLHLMEEIKKVKRVLQKAMPDAPHEIIVVLDANIGQNAVNQVKAFDDALGLTGLIVTKLDGTAKGGILAALASDRPVPVRYIGVGEGIDDLRPFDARAFVDALLD</sequence>
<accession>P57010</accession>
<accession>A1IPD2</accession>
<comment type="function">
    <text evidence="1">Involved in targeting and insertion of nascent membrane proteins into the cytoplasmic membrane. Acts as a receptor for the complex formed by the signal recognition particle (SRP) and the ribosome-nascent chain (RNC). Interaction with SRP-RNC leads to the transfer of the RNC complex to the Sec translocase for insertion into the membrane, the hydrolysis of GTP by both Ffh and FtsY, and the dissociation of the SRP-FtsY complex into the individual components.</text>
</comment>
<comment type="catalytic activity">
    <reaction evidence="1">
        <text>GTP + H2O = GDP + phosphate + H(+)</text>
        <dbReference type="Rhea" id="RHEA:19669"/>
        <dbReference type="ChEBI" id="CHEBI:15377"/>
        <dbReference type="ChEBI" id="CHEBI:15378"/>
        <dbReference type="ChEBI" id="CHEBI:37565"/>
        <dbReference type="ChEBI" id="CHEBI:43474"/>
        <dbReference type="ChEBI" id="CHEBI:58189"/>
        <dbReference type="EC" id="3.6.5.4"/>
    </reaction>
</comment>
<comment type="subunit">
    <text evidence="1">Part of the signal recognition particle protein translocation system, which is composed of SRP and FtsY. SRP is a ribonucleoprotein composed of Ffh and a 4.5S RNA molecule.</text>
</comment>
<comment type="subcellular location">
    <subcellularLocation>
        <location>Cell inner membrane</location>
        <topology>Peripheral membrane protein</topology>
        <orientation>Cytoplasmic side</orientation>
    </subcellularLocation>
    <subcellularLocation>
        <location evidence="1">Cytoplasm</location>
    </subcellularLocation>
</comment>
<comment type="similarity">
    <text evidence="1">Belongs to the GTP-binding SRP family. FtsY subfamily.</text>
</comment>
<gene>
    <name evidence="1" type="primary">ftsY</name>
    <name type="synonym">pilA</name>
    <name type="ordered locus">NMA0291</name>
</gene>
<protein>
    <recommendedName>
        <fullName evidence="1">Signal recognition particle receptor FtsY</fullName>
        <shortName evidence="1">SRP receptor</shortName>
        <ecNumber evidence="1">3.6.5.4</ecNumber>
    </recommendedName>
</protein>
<keyword id="KW-0997">Cell inner membrane</keyword>
<keyword id="KW-1003">Cell membrane</keyword>
<keyword id="KW-0963">Cytoplasm</keyword>
<keyword id="KW-0342">GTP-binding</keyword>
<keyword id="KW-0378">Hydrolase</keyword>
<keyword id="KW-0472">Membrane</keyword>
<keyword id="KW-0547">Nucleotide-binding</keyword>
<keyword id="KW-0675">Receptor</keyword>
<evidence type="ECO:0000255" key="1">
    <source>
        <dbReference type="HAMAP-Rule" id="MF_00920"/>
    </source>
</evidence>
<evidence type="ECO:0000256" key="2">
    <source>
        <dbReference type="SAM" id="MobiDB-lite"/>
    </source>
</evidence>
<proteinExistence type="inferred from homology"/>
<organism>
    <name type="scientific">Neisseria meningitidis serogroup A / serotype 4A (strain DSM 15465 / Z2491)</name>
    <dbReference type="NCBI Taxonomy" id="122587"/>
    <lineage>
        <taxon>Bacteria</taxon>
        <taxon>Pseudomonadati</taxon>
        <taxon>Pseudomonadota</taxon>
        <taxon>Betaproteobacteria</taxon>
        <taxon>Neisseriales</taxon>
        <taxon>Neisseriaceae</taxon>
        <taxon>Neisseria</taxon>
    </lineage>
</organism>
<dbReference type="EC" id="3.6.5.4" evidence="1"/>
<dbReference type="EMBL" id="AL157959">
    <property type="protein sequence ID" value="CAM07596.1"/>
    <property type="molecule type" value="Genomic_DNA"/>
</dbReference>
<dbReference type="PIR" id="F82024">
    <property type="entry name" value="F82024"/>
</dbReference>
<dbReference type="RefSeq" id="WP_002247114.1">
    <property type="nucleotide sequence ID" value="NC_003116.1"/>
</dbReference>
<dbReference type="SMR" id="P57010"/>
<dbReference type="EnsemblBacteria" id="CAM07596">
    <property type="protein sequence ID" value="CAM07596"/>
    <property type="gene ID" value="NMA0291"/>
</dbReference>
<dbReference type="KEGG" id="nma:NMA0291"/>
<dbReference type="HOGENOM" id="CLU_009301_0_2_4"/>
<dbReference type="Proteomes" id="UP000000626">
    <property type="component" value="Chromosome"/>
</dbReference>
<dbReference type="GO" id="GO:0005737">
    <property type="term" value="C:cytoplasm"/>
    <property type="evidence" value="ECO:0007669"/>
    <property type="project" value="UniProtKB-SubCell"/>
</dbReference>
<dbReference type="GO" id="GO:0005886">
    <property type="term" value="C:plasma membrane"/>
    <property type="evidence" value="ECO:0007669"/>
    <property type="project" value="UniProtKB-SubCell"/>
</dbReference>
<dbReference type="GO" id="GO:0016887">
    <property type="term" value="F:ATP hydrolysis activity"/>
    <property type="evidence" value="ECO:0007669"/>
    <property type="project" value="InterPro"/>
</dbReference>
<dbReference type="GO" id="GO:0005525">
    <property type="term" value="F:GTP binding"/>
    <property type="evidence" value="ECO:0007669"/>
    <property type="project" value="UniProtKB-UniRule"/>
</dbReference>
<dbReference type="GO" id="GO:0003924">
    <property type="term" value="F:GTPase activity"/>
    <property type="evidence" value="ECO:0007669"/>
    <property type="project" value="UniProtKB-UniRule"/>
</dbReference>
<dbReference type="GO" id="GO:0005047">
    <property type="term" value="F:signal recognition particle binding"/>
    <property type="evidence" value="ECO:0007669"/>
    <property type="project" value="TreeGrafter"/>
</dbReference>
<dbReference type="GO" id="GO:0006614">
    <property type="term" value="P:SRP-dependent cotranslational protein targeting to membrane"/>
    <property type="evidence" value="ECO:0007669"/>
    <property type="project" value="InterPro"/>
</dbReference>
<dbReference type="CDD" id="cd17874">
    <property type="entry name" value="FtsY"/>
    <property type="match status" value="1"/>
</dbReference>
<dbReference type="FunFam" id="1.20.120.140:FF:000002">
    <property type="entry name" value="Signal recognition particle receptor FtsY"/>
    <property type="match status" value="1"/>
</dbReference>
<dbReference type="FunFam" id="3.40.50.300:FF:000053">
    <property type="entry name" value="Signal recognition particle receptor FtsY"/>
    <property type="match status" value="1"/>
</dbReference>
<dbReference type="Gene3D" id="1.20.120.20">
    <property type="entry name" value="Apolipoprotein"/>
    <property type="match status" value="1"/>
</dbReference>
<dbReference type="Gene3D" id="3.40.50.300">
    <property type="entry name" value="P-loop containing nucleotide triphosphate hydrolases"/>
    <property type="match status" value="1"/>
</dbReference>
<dbReference type="Gene3D" id="1.20.120.140">
    <property type="entry name" value="Signal recognition particle SRP54, nucleotide-binding domain"/>
    <property type="match status" value="1"/>
</dbReference>
<dbReference type="HAMAP" id="MF_00920">
    <property type="entry name" value="FtsY"/>
    <property type="match status" value="1"/>
</dbReference>
<dbReference type="InterPro" id="IPR003593">
    <property type="entry name" value="AAA+_ATPase"/>
</dbReference>
<dbReference type="InterPro" id="IPR027417">
    <property type="entry name" value="P-loop_NTPase"/>
</dbReference>
<dbReference type="InterPro" id="IPR013822">
    <property type="entry name" value="Signal_recog_particl_SRP54_hlx"/>
</dbReference>
<dbReference type="InterPro" id="IPR004390">
    <property type="entry name" value="SR_rcpt_FtsY"/>
</dbReference>
<dbReference type="InterPro" id="IPR036225">
    <property type="entry name" value="SRP/SRP_N"/>
</dbReference>
<dbReference type="InterPro" id="IPR000897">
    <property type="entry name" value="SRP54_GTPase_dom"/>
</dbReference>
<dbReference type="InterPro" id="IPR042101">
    <property type="entry name" value="SRP54_N_sf"/>
</dbReference>
<dbReference type="NCBIfam" id="TIGR00064">
    <property type="entry name" value="ftsY"/>
    <property type="match status" value="1"/>
</dbReference>
<dbReference type="PANTHER" id="PTHR43134">
    <property type="entry name" value="SIGNAL RECOGNITION PARTICLE RECEPTOR SUBUNIT ALPHA"/>
    <property type="match status" value="1"/>
</dbReference>
<dbReference type="PANTHER" id="PTHR43134:SF1">
    <property type="entry name" value="SIGNAL RECOGNITION PARTICLE RECEPTOR SUBUNIT ALPHA"/>
    <property type="match status" value="1"/>
</dbReference>
<dbReference type="Pfam" id="PF00448">
    <property type="entry name" value="SRP54"/>
    <property type="match status" value="1"/>
</dbReference>
<dbReference type="Pfam" id="PF02881">
    <property type="entry name" value="SRP54_N"/>
    <property type="match status" value="1"/>
</dbReference>
<dbReference type="SMART" id="SM00382">
    <property type="entry name" value="AAA"/>
    <property type="match status" value="1"/>
</dbReference>
<dbReference type="SMART" id="SM00962">
    <property type="entry name" value="SRP54"/>
    <property type="match status" value="1"/>
</dbReference>
<dbReference type="SMART" id="SM00963">
    <property type="entry name" value="SRP54_N"/>
    <property type="match status" value="1"/>
</dbReference>
<dbReference type="SUPFAM" id="SSF58113">
    <property type="entry name" value="Apolipoprotein A-I"/>
    <property type="match status" value="1"/>
</dbReference>
<dbReference type="SUPFAM" id="SSF47364">
    <property type="entry name" value="Domain of the SRP/SRP receptor G-proteins"/>
    <property type="match status" value="1"/>
</dbReference>
<dbReference type="SUPFAM" id="SSF52540">
    <property type="entry name" value="P-loop containing nucleoside triphosphate hydrolases"/>
    <property type="match status" value="1"/>
</dbReference>
<dbReference type="PROSITE" id="PS00300">
    <property type="entry name" value="SRP54"/>
    <property type="match status" value="1"/>
</dbReference>
<reference key="1">
    <citation type="journal article" date="2000" name="Nature">
        <title>Complete DNA sequence of a serogroup A strain of Neisseria meningitidis Z2491.</title>
        <authorList>
            <person name="Parkhill J."/>
            <person name="Achtman M."/>
            <person name="James K.D."/>
            <person name="Bentley S.D."/>
            <person name="Churcher C.M."/>
            <person name="Klee S.R."/>
            <person name="Morelli G."/>
            <person name="Basham D."/>
            <person name="Brown D."/>
            <person name="Chillingworth T."/>
            <person name="Davies R.M."/>
            <person name="Davis P."/>
            <person name="Devlin K."/>
            <person name="Feltwell T."/>
            <person name="Hamlin N."/>
            <person name="Holroyd S."/>
            <person name="Jagels K."/>
            <person name="Leather S."/>
            <person name="Moule S."/>
            <person name="Mungall K.L."/>
            <person name="Quail M.A."/>
            <person name="Rajandream M.A."/>
            <person name="Rutherford K.M."/>
            <person name="Simmonds M."/>
            <person name="Skelton J."/>
            <person name="Whitehead S."/>
            <person name="Spratt B.G."/>
            <person name="Barrell B.G."/>
        </authorList>
    </citation>
    <scope>NUCLEOTIDE SEQUENCE [LARGE SCALE GENOMIC DNA]</scope>
    <source>
        <strain>DSM 15465 / Z2491</strain>
    </source>
</reference>